<sequence length="135" mass="14235">MAKQQSASAASQRARKKVKKNVADGIAHVHASFNNTIITITDRQGNALSWATSGGQGFKGSRKSTPFAAQVAAEVAGKAAVECGIKNLEVQIKGPGPGRESAVRALNSLGIKITEIQDVTPVPHNGCRPPKRRRI</sequence>
<keyword id="KW-1185">Reference proteome</keyword>
<keyword id="KW-0687">Ribonucleoprotein</keyword>
<keyword id="KW-0689">Ribosomal protein</keyword>
<keyword id="KW-0694">RNA-binding</keyword>
<keyword id="KW-0699">rRNA-binding</keyword>
<proteinExistence type="inferred from homology"/>
<feature type="chain" id="PRO_1000141122" description="Small ribosomal subunit protein uS11">
    <location>
        <begin position="1"/>
        <end position="135"/>
    </location>
</feature>
<reference key="1">
    <citation type="journal article" date="2012" name="Stand. Genomic Sci.">
        <title>Complete genome sequence of Polynucleobacter necessarius subsp. asymbioticus type strain (QLW-P1DMWA-1(T)).</title>
        <authorList>
            <person name="Meincke L."/>
            <person name="Copeland A."/>
            <person name="Lapidus A."/>
            <person name="Lucas S."/>
            <person name="Berry K.W."/>
            <person name="Del Rio T.G."/>
            <person name="Hammon N."/>
            <person name="Dalin E."/>
            <person name="Tice H."/>
            <person name="Pitluck S."/>
            <person name="Richardson P."/>
            <person name="Bruce D."/>
            <person name="Goodwin L."/>
            <person name="Han C."/>
            <person name="Tapia R."/>
            <person name="Detter J.C."/>
            <person name="Schmutz J."/>
            <person name="Brettin T."/>
            <person name="Larimer F."/>
            <person name="Land M."/>
            <person name="Hauser L."/>
            <person name="Kyrpides N.C."/>
            <person name="Ivanova N."/>
            <person name="Goker M."/>
            <person name="Woyke T."/>
            <person name="Wu Q.L."/>
            <person name="Pockl M."/>
            <person name="Hahn M.W."/>
            <person name="Klenk H.P."/>
        </authorList>
    </citation>
    <scope>NUCLEOTIDE SEQUENCE [LARGE SCALE GENOMIC DNA]</scope>
    <source>
        <strain>DSM 18221 / CIP 109841 / QLW-P1DMWA-1</strain>
    </source>
</reference>
<protein>
    <recommendedName>
        <fullName evidence="1">Small ribosomal subunit protein uS11</fullName>
    </recommendedName>
    <alternativeName>
        <fullName evidence="2">30S ribosomal protein S11</fullName>
    </alternativeName>
</protein>
<evidence type="ECO:0000255" key="1">
    <source>
        <dbReference type="HAMAP-Rule" id="MF_01310"/>
    </source>
</evidence>
<evidence type="ECO:0000305" key="2"/>
<accession>A4SUY4</accession>
<organism>
    <name type="scientific">Polynucleobacter asymbioticus (strain DSM 18221 / CIP 109841 / QLW-P1DMWA-1)</name>
    <name type="common">Polynucleobacter necessarius subsp. asymbioticus</name>
    <dbReference type="NCBI Taxonomy" id="312153"/>
    <lineage>
        <taxon>Bacteria</taxon>
        <taxon>Pseudomonadati</taxon>
        <taxon>Pseudomonadota</taxon>
        <taxon>Betaproteobacteria</taxon>
        <taxon>Burkholderiales</taxon>
        <taxon>Burkholderiaceae</taxon>
        <taxon>Polynucleobacter</taxon>
    </lineage>
</organism>
<comment type="function">
    <text evidence="1">Located on the platform of the 30S subunit, it bridges several disparate RNA helices of the 16S rRNA. Forms part of the Shine-Dalgarno cleft in the 70S ribosome.</text>
</comment>
<comment type="subunit">
    <text evidence="1">Part of the 30S ribosomal subunit. Interacts with proteins S7 and S18. Binds to IF-3.</text>
</comment>
<comment type="similarity">
    <text evidence="1">Belongs to the universal ribosomal protein uS11 family.</text>
</comment>
<name>RS11_POLAQ</name>
<dbReference type="EMBL" id="CP000655">
    <property type="protein sequence ID" value="ABP33298.1"/>
    <property type="molecule type" value="Genomic_DNA"/>
</dbReference>
<dbReference type="RefSeq" id="WP_011901923.1">
    <property type="nucleotide sequence ID" value="NC_009379.1"/>
</dbReference>
<dbReference type="SMR" id="A4SUY4"/>
<dbReference type="GeneID" id="31480423"/>
<dbReference type="KEGG" id="pnu:Pnuc_0076"/>
<dbReference type="eggNOG" id="COG0100">
    <property type="taxonomic scope" value="Bacteria"/>
</dbReference>
<dbReference type="HOGENOM" id="CLU_072439_5_0_4"/>
<dbReference type="Proteomes" id="UP000000231">
    <property type="component" value="Chromosome"/>
</dbReference>
<dbReference type="GO" id="GO:1990904">
    <property type="term" value="C:ribonucleoprotein complex"/>
    <property type="evidence" value="ECO:0007669"/>
    <property type="project" value="UniProtKB-KW"/>
</dbReference>
<dbReference type="GO" id="GO:0005840">
    <property type="term" value="C:ribosome"/>
    <property type="evidence" value="ECO:0007669"/>
    <property type="project" value="UniProtKB-KW"/>
</dbReference>
<dbReference type="GO" id="GO:0019843">
    <property type="term" value="F:rRNA binding"/>
    <property type="evidence" value="ECO:0007669"/>
    <property type="project" value="UniProtKB-UniRule"/>
</dbReference>
<dbReference type="GO" id="GO:0003735">
    <property type="term" value="F:structural constituent of ribosome"/>
    <property type="evidence" value="ECO:0007669"/>
    <property type="project" value="InterPro"/>
</dbReference>
<dbReference type="GO" id="GO:0006412">
    <property type="term" value="P:translation"/>
    <property type="evidence" value="ECO:0007669"/>
    <property type="project" value="UniProtKB-UniRule"/>
</dbReference>
<dbReference type="FunFam" id="3.30.420.80:FF:000001">
    <property type="entry name" value="30S ribosomal protein S11"/>
    <property type="match status" value="1"/>
</dbReference>
<dbReference type="Gene3D" id="3.30.420.80">
    <property type="entry name" value="Ribosomal protein S11"/>
    <property type="match status" value="1"/>
</dbReference>
<dbReference type="HAMAP" id="MF_01310">
    <property type="entry name" value="Ribosomal_uS11"/>
    <property type="match status" value="1"/>
</dbReference>
<dbReference type="InterPro" id="IPR001971">
    <property type="entry name" value="Ribosomal_uS11"/>
</dbReference>
<dbReference type="InterPro" id="IPR019981">
    <property type="entry name" value="Ribosomal_uS11_bac-type"/>
</dbReference>
<dbReference type="InterPro" id="IPR018102">
    <property type="entry name" value="Ribosomal_uS11_CS"/>
</dbReference>
<dbReference type="InterPro" id="IPR036967">
    <property type="entry name" value="Ribosomal_uS11_sf"/>
</dbReference>
<dbReference type="NCBIfam" id="NF003698">
    <property type="entry name" value="PRK05309.1"/>
    <property type="match status" value="1"/>
</dbReference>
<dbReference type="NCBIfam" id="TIGR03632">
    <property type="entry name" value="uS11_bact"/>
    <property type="match status" value="1"/>
</dbReference>
<dbReference type="PANTHER" id="PTHR11759">
    <property type="entry name" value="40S RIBOSOMAL PROTEIN S14/30S RIBOSOMAL PROTEIN S11"/>
    <property type="match status" value="1"/>
</dbReference>
<dbReference type="Pfam" id="PF00411">
    <property type="entry name" value="Ribosomal_S11"/>
    <property type="match status" value="1"/>
</dbReference>
<dbReference type="PIRSF" id="PIRSF002131">
    <property type="entry name" value="Ribosomal_S11"/>
    <property type="match status" value="1"/>
</dbReference>
<dbReference type="SUPFAM" id="SSF53137">
    <property type="entry name" value="Translational machinery components"/>
    <property type="match status" value="1"/>
</dbReference>
<dbReference type="PROSITE" id="PS00054">
    <property type="entry name" value="RIBOSOMAL_S11"/>
    <property type="match status" value="1"/>
</dbReference>
<gene>
    <name evidence="1" type="primary">rpsK</name>
    <name type="ordered locus">Pnuc_0076</name>
</gene>